<proteinExistence type="evidence at protein level"/>
<sequence length="88" mass="10006">MSKLFFVVFLCLIISVFAISPADIGCTDISQADFDEKNNNCIKCGEDGFGEEMVNRCRDKCFTDNFYQSCVDLLNKVYEEKDTPPVQE</sequence>
<organism>
    <name type="scientific">Latrodectus tredecimguttatus</name>
    <name type="common">Mediterranean black widow spider</name>
    <name type="synonym">Latrodectus mactans tredecimguttatus</name>
    <dbReference type="NCBI Taxonomy" id="6925"/>
    <lineage>
        <taxon>Eukaryota</taxon>
        <taxon>Metazoa</taxon>
        <taxon>Ecdysozoa</taxon>
        <taxon>Arthropoda</taxon>
        <taxon>Chelicerata</taxon>
        <taxon>Arachnida</taxon>
        <taxon>Araneae</taxon>
        <taxon>Araneomorphae</taxon>
        <taxon>Entelegynae</taxon>
        <taxon>Araneoidea</taxon>
        <taxon>Theridiidae</taxon>
        <taxon>Latrodectus</taxon>
    </lineage>
</organism>
<comment type="function">
    <text evidence="3 4">May increase the toxicity of alpha-latrotoxin and/or other venom components. Is non-toxic to mice and to the cockroach Periplaneta americana.</text>
</comment>
<comment type="subcellular location">
    <subcellularLocation>
        <location evidence="1">Secreted</location>
    </subcellularLocation>
</comment>
<comment type="tissue specificity">
    <text evidence="9">Expressed by the venom gland.</text>
</comment>
<comment type="miscellaneous">
    <text evidence="1">Co-purifies with alpha-latrotoxin-Lt1a.</text>
</comment>
<comment type="similarity">
    <text>Belongs to the arthropod CHH/MIH/GIH/VIH hormone family.</text>
</comment>
<dbReference type="EMBL" id="X63116">
    <property type="protein sequence ID" value="CAA44830.1"/>
    <property type="molecule type" value="mRNA"/>
</dbReference>
<dbReference type="EMBL" id="Z49089">
    <property type="protein sequence ID" value="CAA88911.1"/>
    <property type="molecule type" value="mRNA"/>
</dbReference>
<dbReference type="ArachnoServer" id="AS000288">
    <property type="toxin name" value="alpha-Latrotoxin-associated LMWP"/>
</dbReference>
<dbReference type="GO" id="GO:0005576">
    <property type="term" value="C:extracellular region"/>
    <property type="evidence" value="ECO:0007669"/>
    <property type="project" value="UniProtKB-SubCell"/>
</dbReference>
<dbReference type="Gene3D" id="1.10.2010.10">
    <property type="entry name" value="Crustacean CHH/MIH/GIH neurohormone"/>
    <property type="match status" value="1"/>
</dbReference>
<dbReference type="InterPro" id="IPR035957">
    <property type="entry name" value="Crust_neurohorm_sf"/>
</dbReference>
<dbReference type="SUPFAM" id="SSF81778">
    <property type="entry name" value="Crustacean CHH/MIH/GIH neurohormone"/>
    <property type="match status" value="1"/>
</dbReference>
<reference key="1">
    <citation type="journal article" date="1992" name="Toxicon">
        <title>Structure of the low molecular weight protein copurified with alpha-latrotoxin.</title>
        <authorList>
            <person name="Kiyatkin N."/>
            <person name="Dulubova I."/>
            <person name="Chekhovskaya I."/>
            <person name="Lipkin A."/>
            <person name="Grishin E."/>
        </authorList>
    </citation>
    <scope>NUCLEOTIDE SEQUENCE [MRNA]</scope>
    <scope>SUBCELLULAR LOCATION</scope>
    <scope>PURIFICATION</scope>
    <source>
        <tissue>Venom</tissue>
        <tissue>Venom gland</tissue>
    </source>
</reference>
<reference key="2">
    <citation type="journal article" date="1995" name="Eur. J. Biochem.">
        <title>The cloning of a cDNA encoding a protein (latrodectin) which co-purifies with the alpha-latrotoxin from the black widow spider Latrodectus tredecimguttatus (Theridiidae).</title>
        <authorList>
            <person name="Pescatori M."/>
            <person name="Bradbury A."/>
            <person name="Bouet F."/>
            <person name="Gargano N."/>
            <person name="Mastrogiacomo A."/>
            <person name="Grasso A."/>
        </authorList>
    </citation>
    <scope>NUCLEOTIDE SEQUENCE [MRNA]</scope>
    <scope>SUBCELLULAR LOCATION</scope>
    <scope>PURIFICATION</scope>
    <source>
        <tissue>Venom</tissue>
        <tissue>Venom gland</tissue>
    </source>
</reference>
<reference key="3">
    <citation type="journal article" date="1998" name="Toxicon">
        <title>Black widow spider toxins: the present and the future.</title>
        <authorList>
            <person name="Grishin E.V."/>
        </authorList>
    </citation>
    <scope>PROTEIN SEQUENCE OF 19-88</scope>
    <source>
        <tissue>Venom</tissue>
    </source>
</reference>
<reference key="4">
    <citation type="journal article" date="2012" name="Biochem. Pharmacol.">
        <title>Cloning and activity of a novel alpha-latrotoxin from red-back spider venom.</title>
        <authorList>
            <person name="Graudins A."/>
            <person name="Little M.J."/>
            <person name="Pineda S.S."/>
            <person name="Hains P.G."/>
            <person name="King G.F."/>
            <person name="Broady K.W."/>
            <person name="Nicholson G.M."/>
        </authorList>
    </citation>
    <scope>PROTEIN SEQUENCE OF 19-40</scope>
    <source>
        <tissue>Venom gland</tissue>
    </source>
</reference>
<reference key="5">
    <citation type="journal article" date="1994" name="J. Biol. Chem.">
        <title>The low molecular weight protein which co-purifies with alpha-latrotoxin is structurally related to crustacean hyperglycemic hormones.</title>
        <authorList>
            <person name="Gasparini S."/>
            <person name="Kiyatkin N."/>
            <person name="Drevet P."/>
            <person name="Boulain J.C."/>
            <person name="Tacnet F."/>
            <person name="Ripoche P."/>
            <person name="Forest E."/>
            <person name="Grishin E."/>
            <person name="Menez A."/>
        </authorList>
    </citation>
    <scope>FUNCTION</scope>
</reference>
<reference key="6">
    <citation type="journal article" date="1995" name="Toxicon">
        <title>Low molecular weight components from black widow spider venom.</title>
        <authorList>
            <person name="Volkova T.M."/>
            <person name="Pluzhnikov K.A."/>
            <person name="Woll P.G."/>
            <person name="Grishin E.V."/>
        </authorList>
    </citation>
    <scope>FUNCTION</scope>
</reference>
<feature type="signal peptide" evidence="2 5">
    <location>
        <begin position="1"/>
        <end position="18"/>
    </location>
</feature>
<feature type="chain" id="PRO_0000035544" description="Alpha-latrotoxin-associated low molecular weight protein">
    <location>
        <begin position="19"/>
        <end position="88"/>
    </location>
</feature>
<feature type="sequence conflict" description="In Ref. 4; AA sequence." evidence="8" ref="4">
    <original>Q</original>
    <variation>N</variation>
    <location>
        <position position="31"/>
    </location>
</feature>
<feature type="sequence conflict" description="In Ref. 4; AA sequence." evidence="8" ref="4">
    <location>
        <position position="37"/>
    </location>
</feature>
<protein>
    <recommendedName>
        <fullName evidence="6">Alpha-latrotoxin-associated low molecular weight protein</fullName>
        <shortName evidence="6">Alpha-latrotoxin-associated LMWP</shortName>
    </recommendedName>
    <alternativeName>
        <fullName evidence="8">Latrodectin-1</fullName>
        <shortName evidence="7">Latrodectin</shortName>
    </alternativeName>
</protein>
<keyword id="KW-0903">Direct protein sequencing</keyword>
<keyword id="KW-0964">Secreted</keyword>
<keyword id="KW-0732">Signal</keyword>
<evidence type="ECO:0000269" key="1">
    <source>
    </source>
</evidence>
<evidence type="ECO:0000269" key="2">
    <source>
    </source>
</evidence>
<evidence type="ECO:0000269" key="3">
    <source>
    </source>
</evidence>
<evidence type="ECO:0000269" key="4">
    <source>
    </source>
</evidence>
<evidence type="ECO:0000269" key="5">
    <source>
    </source>
</evidence>
<evidence type="ECO:0000303" key="6">
    <source>
    </source>
</evidence>
<evidence type="ECO:0000303" key="7">
    <source>
    </source>
</evidence>
<evidence type="ECO:0000305" key="8"/>
<evidence type="ECO:0000305" key="9">
    <source>
    </source>
</evidence>
<accession>P49125</accession>
<name>TXA1_LATTR</name>